<sequence length="261" mass="29286">MTVVTMKQLLEAGVHFGHQTRRWDPKMAPYIFTQRNGIYIIDLQKTIKMLDDAYNYVKAVAQDGGVFLFVGTKKQAQDAVKEEATRAGQYYVNQRWLGGTLTNWTTIQSRVKRLKELKQMSEDGTFDVLPKKEVALLTKEMEKLERFLGGIEDMPRIPDVMFVVDPKKEKIAVHEANILGIPVVAMVDTNTDPDPIDVVIPANDDAIRAIRLISGAMADAIIEGKQGQDDSEDVEKEMADKAAAEDDEEESIEVVVEKSED</sequence>
<feature type="chain" id="PRO_0000134181" description="Small ribosomal subunit protein uS2">
    <location>
        <begin position="1"/>
        <end position="261"/>
    </location>
</feature>
<feature type="region of interest" description="Disordered" evidence="2">
    <location>
        <begin position="223"/>
        <end position="261"/>
    </location>
</feature>
<gene>
    <name evidence="1" type="primary">rpsB</name>
    <name type="ordered locus">LJ_1500</name>
</gene>
<reference key="1">
    <citation type="journal article" date="2004" name="Proc. Natl. Acad. Sci. U.S.A.">
        <title>The genome sequence of the probiotic intestinal bacterium Lactobacillus johnsonii NCC 533.</title>
        <authorList>
            <person name="Pridmore R.D."/>
            <person name="Berger B."/>
            <person name="Desiere F."/>
            <person name="Vilanova D."/>
            <person name="Barretto C."/>
            <person name="Pittet A.-C."/>
            <person name="Zwahlen M.-C."/>
            <person name="Rouvet M."/>
            <person name="Altermann E."/>
            <person name="Barrangou R."/>
            <person name="Mollet B."/>
            <person name="Mercenier A."/>
            <person name="Klaenhammer T."/>
            <person name="Arigoni F."/>
            <person name="Schell M.A."/>
        </authorList>
    </citation>
    <scope>NUCLEOTIDE SEQUENCE [LARGE SCALE GENOMIC DNA]</scope>
    <source>
        <strain>CNCM I-1225 / La1 / NCC 533</strain>
    </source>
</reference>
<keyword id="KW-0687">Ribonucleoprotein</keyword>
<keyword id="KW-0689">Ribosomal protein</keyword>
<dbReference type="EMBL" id="AE017198">
    <property type="protein sequence ID" value="AAS09268.1"/>
    <property type="molecule type" value="Genomic_DNA"/>
</dbReference>
<dbReference type="RefSeq" id="WP_004895270.1">
    <property type="nucleotide sequence ID" value="NC_005362.1"/>
</dbReference>
<dbReference type="SMR" id="Q74IR7"/>
<dbReference type="GeneID" id="83570173"/>
<dbReference type="KEGG" id="ljo:LJ_1500"/>
<dbReference type="eggNOG" id="COG0052">
    <property type="taxonomic scope" value="Bacteria"/>
</dbReference>
<dbReference type="HOGENOM" id="CLU_040318_1_2_9"/>
<dbReference type="Proteomes" id="UP000000581">
    <property type="component" value="Chromosome"/>
</dbReference>
<dbReference type="GO" id="GO:0022627">
    <property type="term" value="C:cytosolic small ribosomal subunit"/>
    <property type="evidence" value="ECO:0007669"/>
    <property type="project" value="TreeGrafter"/>
</dbReference>
<dbReference type="GO" id="GO:0003735">
    <property type="term" value="F:structural constituent of ribosome"/>
    <property type="evidence" value="ECO:0007669"/>
    <property type="project" value="InterPro"/>
</dbReference>
<dbReference type="GO" id="GO:0006412">
    <property type="term" value="P:translation"/>
    <property type="evidence" value="ECO:0007669"/>
    <property type="project" value="UniProtKB-UniRule"/>
</dbReference>
<dbReference type="CDD" id="cd01425">
    <property type="entry name" value="RPS2"/>
    <property type="match status" value="1"/>
</dbReference>
<dbReference type="FunFam" id="1.10.287.610:FF:000001">
    <property type="entry name" value="30S ribosomal protein S2"/>
    <property type="match status" value="1"/>
</dbReference>
<dbReference type="Gene3D" id="3.40.50.10490">
    <property type="entry name" value="Glucose-6-phosphate isomerase like protein, domain 1"/>
    <property type="match status" value="1"/>
</dbReference>
<dbReference type="Gene3D" id="1.10.287.610">
    <property type="entry name" value="Helix hairpin bin"/>
    <property type="match status" value="1"/>
</dbReference>
<dbReference type="HAMAP" id="MF_00291_B">
    <property type="entry name" value="Ribosomal_uS2_B"/>
    <property type="match status" value="1"/>
</dbReference>
<dbReference type="InterPro" id="IPR001865">
    <property type="entry name" value="Ribosomal_uS2"/>
</dbReference>
<dbReference type="InterPro" id="IPR005706">
    <property type="entry name" value="Ribosomal_uS2_bac/mit/plastid"/>
</dbReference>
<dbReference type="InterPro" id="IPR018130">
    <property type="entry name" value="Ribosomal_uS2_CS"/>
</dbReference>
<dbReference type="InterPro" id="IPR023591">
    <property type="entry name" value="Ribosomal_uS2_flav_dom_sf"/>
</dbReference>
<dbReference type="NCBIfam" id="TIGR01011">
    <property type="entry name" value="rpsB_bact"/>
    <property type="match status" value="1"/>
</dbReference>
<dbReference type="PANTHER" id="PTHR12534">
    <property type="entry name" value="30S RIBOSOMAL PROTEIN S2 PROKARYOTIC AND ORGANELLAR"/>
    <property type="match status" value="1"/>
</dbReference>
<dbReference type="PANTHER" id="PTHR12534:SF0">
    <property type="entry name" value="SMALL RIBOSOMAL SUBUNIT PROTEIN US2M"/>
    <property type="match status" value="1"/>
</dbReference>
<dbReference type="Pfam" id="PF00318">
    <property type="entry name" value="Ribosomal_S2"/>
    <property type="match status" value="1"/>
</dbReference>
<dbReference type="PRINTS" id="PR00395">
    <property type="entry name" value="RIBOSOMALS2"/>
</dbReference>
<dbReference type="SUPFAM" id="SSF52313">
    <property type="entry name" value="Ribosomal protein S2"/>
    <property type="match status" value="1"/>
</dbReference>
<dbReference type="PROSITE" id="PS00962">
    <property type="entry name" value="RIBOSOMAL_S2_1"/>
    <property type="match status" value="1"/>
</dbReference>
<dbReference type="PROSITE" id="PS00963">
    <property type="entry name" value="RIBOSOMAL_S2_2"/>
    <property type="match status" value="1"/>
</dbReference>
<protein>
    <recommendedName>
        <fullName evidence="1">Small ribosomal subunit protein uS2</fullName>
    </recommendedName>
    <alternativeName>
        <fullName evidence="3">30S ribosomal protein S2</fullName>
    </alternativeName>
</protein>
<comment type="similarity">
    <text evidence="1">Belongs to the universal ribosomal protein uS2 family.</text>
</comment>
<accession>Q74IR7</accession>
<evidence type="ECO:0000255" key="1">
    <source>
        <dbReference type="HAMAP-Rule" id="MF_00291"/>
    </source>
</evidence>
<evidence type="ECO:0000256" key="2">
    <source>
        <dbReference type="SAM" id="MobiDB-lite"/>
    </source>
</evidence>
<evidence type="ECO:0000305" key="3"/>
<proteinExistence type="inferred from homology"/>
<name>RS2_LACJO</name>
<organism>
    <name type="scientific">Lactobacillus johnsonii (strain CNCM I-12250 / La1 / NCC 533)</name>
    <dbReference type="NCBI Taxonomy" id="257314"/>
    <lineage>
        <taxon>Bacteria</taxon>
        <taxon>Bacillati</taxon>
        <taxon>Bacillota</taxon>
        <taxon>Bacilli</taxon>
        <taxon>Lactobacillales</taxon>
        <taxon>Lactobacillaceae</taxon>
        <taxon>Lactobacillus</taxon>
    </lineage>
</organism>